<proteinExistence type="inferred from homology"/>
<sequence>MIEADRLIAATGPRDREEVQDRAIRPLSLADYIGQPTVREQMELFIQAARGRSESLDHTLIFGPPGLGKTTLANIIAQEMGVSIKSTSGPVLERPGDLAALLTNLEPHDVLFIDEIHRLSPIVEEVLYPAMEDFQLDIMIGEGPAARSIKLDLPPFTLVGATTRAGMLTNPLRDRFGIVQRLEFYSTADLATIVSRSAGILGLPLDPEGAFEIARRARGTPRIANRLLRRVRDFAEVRAKGHITKAVADLALNLLDVDEHGFDHQDRRLLLTMIEKFDGGPVGVDSLAAAISEERHTIEDVLEPYLIQQGYIMRTPRGRVVTRHAYLHFGLNIPSRLGEMPVVDEFLDAVDD</sequence>
<gene>
    <name evidence="1" type="primary">ruvB</name>
    <name type="ordered locus">PFLU_4913</name>
</gene>
<organism>
    <name type="scientific">Pseudomonas fluorescens (strain SBW25)</name>
    <dbReference type="NCBI Taxonomy" id="216595"/>
    <lineage>
        <taxon>Bacteria</taxon>
        <taxon>Pseudomonadati</taxon>
        <taxon>Pseudomonadota</taxon>
        <taxon>Gammaproteobacteria</taxon>
        <taxon>Pseudomonadales</taxon>
        <taxon>Pseudomonadaceae</taxon>
        <taxon>Pseudomonas</taxon>
    </lineage>
</organism>
<accession>C3JYS7</accession>
<feature type="chain" id="PRO_1000201843" description="Holliday junction branch migration complex subunit RuvB">
    <location>
        <begin position="1"/>
        <end position="352"/>
    </location>
</feature>
<feature type="region of interest" description="Large ATPase domain (RuvB-L)" evidence="1">
    <location>
        <begin position="4"/>
        <end position="185"/>
    </location>
</feature>
<feature type="region of interest" description="Small ATPAse domain (RuvB-S)" evidence="1">
    <location>
        <begin position="186"/>
        <end position="256"/>
    </location>
</feature>
<feature type="region of interest" description="Head domain (RuvB-H)" evidence="1">
    <location>
        <begin position="259"/>
        <end position="352"/>
    </location>
</feature>
<feature type="binding site" evidence="1">
    <location>
        <position position="24"/>
    </location>
    <ligand>
        <name>ATP</name>
        <dbReference type="ChEBI" id="CHEBI:30616"/>
    </ligand>
</feature>
<feature type="binding site" evidence="1">
    <location>
        <position position="25"/>
    </location>
    <ligand>
        <name>ATP</name>
        <dbReference type="ChEBI" id="CHEBI:30616"/>
    </ligand>
</feature>
<feature type="binding site" evidence="1">
    <location>
        <position position="66"/>
    </location>
    <ligand>
        <name>ATP</name>
        <dbReference type="ChEBI" id="CHEBI:30616"/>
    </ligand>
</feature>
<feature type="binding site" evidence="1">
    <location>
        <position position="69"/>
    </location>
    <ligand>
        <name>ATP</name>
        <dbReference type="ChEBI" id="CHEBI:30616"/>
    </ligand>
</feature>
<feature type="binding site" evidence="1">
    <location>
        <position position="70"/>
    </location>
    <ligand>
        <name>ATP</name>
        <dbReference type="ChEBI" id="CHEBI:30616"/>
    </ligand>
</feature>
<feature type="binding site" evidence="1">
    <location>
        <position position="70"/>
    </location>
    <ligand>
        <name>Mg(2+)</name>
        <dbReference type="ChEBI" id="CHEBI:18420"/>
    </ligand>
</feature>
<feature type="binding site" evidence="1">
    <location>
        <position position="71"/>
    </location>
    <ligand>
        <name>ATP</name>
        <dbReference type="ChEBI" id="CHEBI:30616"/>
    </ligand>
</feature>
<feature type="binding site" evidence="1">
    <location>
        <begin position="132"/>
        <end position="134"/>
    </location>
    <ligand>
        <name>ATP</name>
        <dbReference type="ChEBI" id="CHEBI:30616"/>
    </ligand>
</feature>
<feature type="binding site" evidence="1">
    <location>
        <position position="175"/>
    </location>
    <ligand>
        <name>ATP</name>
        <dbReference type="ChEBI" id="CHEBI:30616"/>
    </ligand>
</feature>
<feature type="binding site" evidence="1">
    <location>
        <position position="185"/>
    </location>
    <ligand>
        <name>ATP</name>
        <dbReference type="ChEBI" id="CHEBI:30616"/>
    </ligand>
</feature>
<feature type="binding site" evidence="1">
    <location>
        <position position="222"/>
    </location>
    <ligand>
        <name>ATP</name>
        <dbReference type="ChEBI" id="CHEBI:30616"/>
    </ligand>
</feature>
<feature type="binding site" evidence="1">
    <location>
        <position position="295"/>
    </location>
    <ligand>
        <name>DNA</name>
        <dbReference type="ChEBI" id="CHEBI:16991"/>
    </ligand>
</feature>
<feature type="binding site" evidence="1">
    <location>
        <position position="314"/>
    </location>
    <ligand>
        <name>DNA</name>
        <dbReference type="ChEBI" id="CHEBI:16991"/>
    </ligand>
</feature>
<feature type="binding site" evidence="1">
    <location>
        <position position="319"/>
    </location>
    <ligand>
        <name>DNA</name>
        <dbReference type="ChEBI" id="CHEBI:16991"/>
    </ligand>
</feature>
<evidence type="ECO:0000255" key="1">
    <source>
        <dbReference type="HAMAP-Rule" id="MF_00016"/>
    </source>
</evidence>
<keyword id="KW-0067">ATP-binding</keyword>
<keyword id="KW-0963">Cytoplasm</keyword>
<keyword id="KW-0227">DNA damage</keyword>
<keyword id="KW-0233">DNA recombination</keyword>
<keyword id="KW-0234">DNA repair</keyword>
<keyword id="KW-0238">DNA-binding</keyword>
<keyword id="KW-0378">Hydrolase</keyword>
<keyword id="KW-0547">Nucleotide-binding</keyword>
<protein>
    <recommendedName>
        <fullName evidence="1">Holliday junction branch migration complex subunit RuvB</fullName>
        <ecNumber evidence="1">3.6.4.-</ecNumber>
    </recommendedName>
</protein>
<comment type="function">
    <text evidence="1">The RuvA-RuvB-RuvC complex processes Holliday junction (HJ) DNA during genetic recombination and DNA repair, while the RuvA-RuvB complex plays an important role in the rescue of blocked DNA replication forks via replication fork reversal (RFR). RuvA specifically binds to HJ cruciform DNA, conferring on it an open structure. The RuvB hexamer acts as an ATP-dependent pump, pulling dsDNA into and through the RuvAB complex. RuvB forms 2 homohexamers on either side of HJ DNA bound by 1 or 2 RuvA tetramers; 4 subunits per hexamer contact DNA at a time. Coordinated motions by a converter formed by DNA-disengaged RuvB subunits stimulates ATP hydrolysis and nucleotide exchange. Immobilization of the converter enables RuvB to convert the ATP-contained energy into a lever motion, pulling 2 nucleotides of DNA out of the RuvA tetramer per ATP hydrolyzed, thus driving DNA branch migration. The RuvB motors rotate together with the DNA substrate, which together with the progressing nucleotide cycle form the mechanistic basis for DNA recombination by continuous HJ branch migration. Branch migration allows RuvC to scan DNA until it finds its consensus sequence, where it cleaves and resolves cruciform DNA.</text>
</comment>
<comment type="catalytic activity">
    <reaction evidence="1">
        <text>ATP + H2O = ADP + phosphate + H(+)</text>
        <dbReference type="Rhea" id="RHEA:13065"/>
        <dbReference type="ChEBI" id="CHEBI:15377"/>
        <dbReference type="ChEBI" id="CHEBI:15378"/>
        <dbReference type="ChEBI" id="CHEBI:30616"/>
        <dbReference type="ChEBI" id="CHEBI:43474"/>
        <dbReference type="ChEBI" id="CHEBI:456216"/>
    </reaction>
</comment>
<comment type="subunit">
    <text evidence="1">Homohexamer. Forms an RuvA(8)-RuvB(12)-Holliday junction (HJ) complex. HJ DNA is sandwiched between 2 RuvA tetramers; dsDNA enters through RuvA and exits via RuvB. An RuvB hexamer assembles on each DNA strand where it exits the tetramer. Each RuvB hexamer is contacted by two RuvA subunits (via domain III) on 2 adjacent RuvB subunits; this complex drives branch migration. In the full resolvosome a probable DNA-RuvA(4)-RuvB(12)-RuvC(2) complex forms which resolves the HJ.</text>
</comment>
<comment type="subcellular location">
    <subcellularLocation>
        <location evidence="1">Cytoplasm</location>
    </subcellularLocation>
</comment>
<comment type="domain">
    <text evidence="1">Has 3 domains, the large (RuvB-L) and small ATPase (RuvB-S) domains and the C-terminal head (RuvB-H) domain. The head domain binds DNA, while the ATPase domains jointly bind ATP, ADP or are empty depending on the state of the subunit in the translocation cycle. During a single DNA translocation step the structure of each domain remains the same, but their relative positions change.</text>
</comment>
<comment type="similarity">
    <text evidence="1">Belongs to the RuvB family.</text>
</comment>
<dbReference type="EC" id="3.6.4.-" evidence="1"/>
<dbReference type="EMBL" id="AM181176">
    <property type="protein sequence ID" value="CAY51819.1"/>
    <property type="molecule type" value="Genomic_DNA"/>
</dbReference>
<dbReference type="RefSeq" id="WP_015885611.1">
    <property type="nucleotide sequence ID" value="NC_012660.1"/>
</dbReference>
<dbReference type="SMR" id="C3JYS7"/>
<dbReference type="STRING" id="294.SRM1_04344"/>
<dbReference type="GeneID" id="93466527"/>
<dbReference type="eggNOG" id="COG2255">
    <property type="taxonomic scope" value="Bacteria"/>
</dbReference>
<dbReference type="HOGENOM" id="CLU_055599_1_0_6"/>
<dbReference type="OrthoDB" id="9804478at2"/>
<dbReference type="GO" id="GO:0005737">
    <property type="term" value="C:cytoplasm"/>
    <property type="evidence" value="ECO:0007669"/>
    <property type="project" value="UniProtKB-SubCell"/>
</dbReference>
<dbReference type="GO" id="GO:0048476">
    <property type="term" value="C:Holliday junction resolvase complex"/>
    <property type="evidence" value="ECO:0007669"/>
    <property type="project" value="UniProtKB-UniRule"/>
</dbReference>
<dbReference type="GO" id="GO:0005524">
    <property type="term" value="F:ATP binding"/>
    <property type="evidence" value="ECO:0007669"/>
    <property type="project" value="UniProtKB-UniRule"/>
</dbReference>
<dbReference type="GO" id="GO:0016887">
    <property type="term" value="F:ATP hydrolysis activity"/>
    <property type="evidence" value="ECO:0007669"/>
    <property type="project" value="InterPro"/>
</dbReference>
<dbReference type="GO" id="GO:0000400">
    <property type="term" value="F:four-way junction DNA binding"/>
    <property type="evidence" value="ECO:0007669"/>
    <property type="project" value="UniProtKB-UniRule"/>
</dbReference>
<dbReference type="GO" id="GO:0009378">
    <property type="term" value="F:four-way junction helicase activity"/>
    <property type="evidence" value="ECO:0007669"/>
    <property type="project" value="InterPro"/>
</dbReference>
<dbReference type="GO" id="GO:0006310">
    <property type="term" value="P:DNA recombination"/>
    <property type="evidence" value="ECO:0007669"/>
    <property type="project" value="UniProtKB-UniRule"/>
</dbReference>
<dbReference type="GO" id="GO:0006281">
    <property type="term" value="P:DNA repair"/>
    <property type="evidence" value="ECO:0007669"/>
    <property type="project" value="UniProtKB-UniRule"/>
</dbReference>
<dbReference type="CDD" id="cd00009">
    <property type="entry name" value="AAA"/>
    <property type="match status" value="1"/>
</dbReference>
<dbReference type="FunFam" id="1.10.10.10:FF:000086">
    <property type="entry name" value="Holliday junction ATP-dependent DNA helicase RuvB"/>
    <property type="match status" value="1"/>
</dbReference>
<dbReference type="FunFam" id="1.10.8.60:FF:000023">
    <property type="entry name" value="Holliday junction ATP-dependent DNA helicase RuvB"/>
    <property type="match status" value="1"/>
</dbReference>
<dbReference type="FunFam" id="3.40.50.300:FF:000073">
    <property type="entry name" value="Holliday junction ATP-dependent DNA helicase RuvB"/>
    <property type="match status" value="1"/>
</dbReference>
<dbReference type="Gene3D" id="1.10.8.60">
    <property type="match status" value="1"/>
</dbReference>
<dbReference type="Gene3D" id="3.40.50.300">
    <property type="entry name" value="P-loop containing nucleotide triphosphate hydrolases"/>
    <property type="match status" value="1"/>
</dbReference>
<dbReference type="Gene3D" id="1.10.10.10">
    <property type="entry name" value="Winged helix-like DNA-binding domain superfamily/Winged helix DNA-binding domain"/>
    <property type="match status" value="1"/>
</dbReference>
<dbReference type="HAMAP" id="MF_00016">
    <property type="entry name" value="DNA_HJ_migration_RuvB"/>
    <property type="match status" value="1"/>
</dbReference>
<dbReference type="InterPro" id="IPR003593">
    <property type="entry name" value="AAA+_ATPase"/>
</dbReference>
<dbReference type="InterPro" id="IPR041445">
    <property type="entry name" value="AAA_lid_4"/>
</dbReference>
<dbReference type="InterPro" id="IPR004605">
    <property type="entry name" value="DNA_helicase_Holl-junc_RuvB"/>
</dbReference>
<dbReference type="InterPro" id="IPR027417">
    <property type="entry name" value="P-loop_NTPase"/>
</dbReference>
<dbReference type="InterPro" id="IPR008824">
    <property type="entry name" value="RuvB-like_N"/>
</dbReference>
<dbReference type="InterPro" id="IPR008823">
    <property type="entry name" value="RuvB_C"/>
</dbReference>
<dbReference type="InterPro" id="IPR036388">
    <property type="entry name" value="WH-like_DNA-bd_sf"/>
</dbReference>
<dbReference type="InterPro" id="IPR036390">
    <property type="entry name" value="WH_DNA-bd_sf"/>
</dbReference>
<dbReference type="NCBIfam" id="NF000868">
    <property type="entry name" value="PRK00080.1"/>
    <property type="match status" value="1"/>
</dbReference>
<dbReference type="NCBIfam" id="TIGR00635">
    <property type="entry name" value="ruvB"/>
    <property type="match status" value="1"/>
</dbReference>
<dbReference type="PANTHER" id="PTHR42848">
    <property type="match status" value="1"/>
</dbReference>
<dbReference type="PANTHER" id="PTHR42848:SF1">
    <property type="entry name" value="HOLLIDAY JUNCTION BRANCH MIGRATION COMPLEX SUBUNIT RUVB"/>
    <property type="match status" value="1"/>
</dbReference>
<dbReference type="Pfam" id="PF17864">
    <property type="entry name" value="AAA_lid_4"/>
    <property type="match status" value="1"/>
</dbReference>
<dbReference type="Pfam" id="PF05491">
    <property type="entry name" value="RuvB_C"/>
    <property type="match status" value="1"/>
</dbReference>
<dbReference type="Pfam" id="PF05496">
    <property type="entry name" value="RuvB_N"/>
    <property type="match status" value="1"/>
</dbReference>
<dbReference type="SMART" id="SM00382">
    <property type="entry name" value="AAA"/>
    <property type="match status" value="1"/>
</dbReference>
<dbReference type="SUPFAM" id="SSF52540">
    <property type="entry name" value="P-loop containing nucleoside triphosphate hydrolases"/>
    <property type="match status" value="1"/>
</dbReference>
<dbReference type="SUPFAM" id="SSF46785">
    <property type="entry name" value="Winged helix' DNA-binding domain"/>
    <property type="match status" value="1"/>
</dbReference>
<reference key="1">
    <citation type="journal article" date="2009" name="Genome Biol.">
        <title>Genomic and genetic analyses of diversity and plant interactions of Pseudomonas fluorescens.</title>
        <authorList>
            <person name="Silby M.W."/>
            <person name="Cerdeno-Tarraga A.M."/>
            <person name="Vernikos G.S."/>
            <person name="Giddens S.R."/>
            <person name="Jackson R.W."/>
            <person name="Preston G.M."/>
            <person name="Zhang X.-X."/>
            <person name="Moon C.D."/>
            <person name="Gehrig S.M."/>
            <person name="Godfrey S.A.C."/>
            <person name="Knight C.G."/>
            <person name="Malone J.G."/>
            <person name="Robinson Z."/>
            <person name="Spiers A.J."/>
            <person name="Harris S."/>
            <person name="Challis G.L."/>
            <person name="Yaxley A.M."/>
            <person name="Harris D."/>
            <person name="Seeger K."/>
            <person name="Murphy L."/>
            <person name="Rutter S."/>
            <person name="Squares R."/>
            <person name="Quail M.A."/>
            <person name="Saunders E."/>
            <person name="Mavromatis K."/>
            <person name="Brettin T.S."/>
            <person name="Bentley S.D."/>
            <person name="Hothersall J."/>
            <person name="Stephens E."/>
            <person name="Thomas C.M."/>
            <person name="Parkhill J."/>
            <person name="Levy S.B."/>
            <person name="Rainey P.B."/>
            <person name="Thomson N.R."/>
        </authorList>
    </citation>
    <scope>NUCLEOTIDE SEQUENCE [LARGE SCALE GENOMIC DNA]</scope>
    <source>
        <strain>SBW25</strain>
    </source>
</reference>
<name>RUVB_PSEFS</name>